<feature type="chain" id="PRO_0000161769" description="DNA ligase">
    <location>
        <begin position="1"/>
        <end position="670"/>
    </location>
</feature>
<feature type="domain" description="BRCT" evidence="1">
    <location>
        <begin position="586"/>
        <end position="670"/>
    </location>
</feature>
<feature type="active site" description="N6-AMP-lysine intermediate" evidence="1 2 3">
    <location>
        <position position="118"/>
    </location>
</feature>
<feature type="binding site" evidence="1">
    <location>
        <begin position="34"/>
        <end position="38"/>
    </location>
    <ligand>
        <name>NAD(+)</name>
        <dbReference type="ChEBI" id="CHEBI:57540"/>
    </ligand>
</feature>
<feature type="binding site" evidence="1">
    <location>
        <begin position="84"/>
        <end position="85"/>
    </location>
    <ligand>
        <name>NAD(+)</name>
        <dbReference type="ChEBI" id="CHEBI:57540"/>
    </ligand>
</feature>
<feature type="binding site" evidence="5">
    <location>
        <begin position="116"/>
        <end position="119"/>
    </location>
    <ligand>
        <name>NAD(+)</name>
        <dbReference type="ChEBI" id="CHEBI:57540"/>
    </ligand>
</feature>
<feature type="binding site" evidence="1">
    <location>
        <position position="139"/>
    </location>
    <ligand>
        <name>NAD(+)</name>
        <dbReference type="ChEBI" id="CHEBI:57540"/>
    </ligand>
</feature>
<feature type="binding site" evidence="1">
    <location>
        <position position="174"/>
    </location>
    <ligand>
        <name>NAD(+)</name>
        <dbReference type="ChEBI" id="CHEBI:57540"/>
    </ligand>
</feature>
<feature type="binding site" evidence="1">
    <location>
        <position position="226"/>
    </location>
    <ligand>
        <name>NAD(+)</name>
        <dbReference type="ChEBI" id="CHEBI:57540"/>
    </ligand>
</feature>
<feature type="binding site" evidence="1">
    <location>
        <position position="291"/>
    </location>
    <ligand>
        <name>NAD(+)</name>
        <dbReference type="ChEBI" id="CHEBI:57540"/>
    </ligand>
</feature>
<feature type="binding site" evidence="1 5">
    <location>
        <position position="315"/>
    </location>
    <ligand>
        <name>NAD(+)</name>
        <dbReference type="ChEBI" id="CHEBI:57540"/>
    </ligand>
</feature>
<feature type="binding site" evidence="1 2">
    <location>
        <position position="409"/>
    </location>
    <ligand>
        <name>Zn(2+)</name>
        <dbReference type="ChEBI" id="CHEBI:29105"/>
    </ligand>
</feature>
<feature type="binding site" evidence="1 2">
    <location>
        <position position="412"/>
    </location>
    <ligand>
        <name>Zn(2+)</name>
        <dbReference type="ChEBI" id="CHEBI:29105"/>
    </ligand>
</feature>
<feature type="binding site" evidence="1 2">
    <location>
        <position position="425"/>
    </location>
    <ligand>
        <name>Zn(2+)</name>
        <dbReference type="ChEBI" id="CHEBI:29105"/>
    </ligand>
</feature>
<feature type="binding site" evidence="1 2">
    <location>
        <position position="430"/>
    </location>
    <ligand>
        <name>Zn(2+)</name>
        <dbReference type="ChEBI" id="CHEBI:29105"/>
    </ligand>
</feature>
<feature type="sequence conflict" description="In Ref. 1; AAC68862." evidence="4" ref="1">
    <original>ALGRKRPF</original>
    <variation>LAEAPS</variation>
    <location>
        <begin position="104"/>
        <end position="111"/>
    </location>
</feature>
<feature type="sequence conflict" description="In Ref. 1; AAC68862." evidence="4" ref="1">
    <location>
        <position position="125"/>
    </location>
</feature>
<feature type="sequence conflict" description="In Ref. 1; AAC68862." evidence="4" ref="1">
    <original>LVFGATR</original>
    <variation>WSTGS</variation>
    <location>
        <begin position="133"/>
        <end position="139"/>
    </location>
</feature>
<feature type="sequence conflict" description="In Ref. 1." evidence="4" ref="1">
    <original>L</original>
    <variation>LGL</variation>
    <location>
        <position position="232"/>
    </location>
</feature>
<feature type="sequence conflict" description="In Ref. 1; AAC68862." evidence="4" ref="1">
    <original>G</original>
    <variation>C</variation>
    <location>
        <position position="257"/>
    </location>
</feature>
<feature type="sequence conflict" description="In Ref. 1; AAC68862." evidence="4" ref="1">
    <original>F</original>
    <variation>G</variation>
    <location>
        <position position="274"/>
    </location>
</feature>
<feature type="sequence conflict" description="In Ref. 1; AAC68862." evidence="4" ref="1">
    <original>V</original>
    <variation>L</variation>
    <location>
        <position position="290"/>
    </location>
</feature>
<feature type="sequence conflict" description="In Ref. 1; AAC68862." evidence="4" ref="1">
    <original>A</original>
    <variation>T</variation>
    <location>
        <position position="296"/>
    </location>
</feature>
<feature type="sequence conflict" description="In Ref. 1; AAC68862." evidence="4" ref="1">
    <original>R</original>
    <variation>G</variation>
    <location>
        <position position="299"/>
    </location>
</feature>
<feature type="sequence conflict" description="In Ref. 1; AAC68862." evidence="4" ref="1">
    <original>E</original>
    <variation>K</variation>
    <location>
        <position position="399"/>
    </location>
</feature>
<feature type="sequence conflict" description="In Ref. 1; AAC68862." evidence="4" ref="1">
    <original>T</original>
    <variation>A</variation>
    <location>
        <position position="408"/>
    </location>
</feature>
<feature type="sequence conflict" description="In Ref. 1; AAC68862." evidence="4" ref="1">
    <original>L</original>
    <variation>I</variation>
    <location>
        <position position="545"/>
    </location>
</feature>
<feature type="helix" evidence="6">
    <location>
        <begin position="3"/>
        <end position="25"/>
    </location>
</feature>
<feature type="strand" evidence="6">
    <location>
        <begin position="34"/>
        <end position="37"/>
    </location>
</feature>
<feature type="helix" evidence="6">
    <location>
        <begin position="38"/>
        <end position="47"/>
    </location>
</feature>
<feature type="helix" evidence="6">
    <location>
        <begin position="52"/>
        <end position="54"/>
    </location>
</feature>
<feature type="helix" evidence="6">
    <location>
        <begin position="60"/>
        <end position="63"/>
    </location>
</feature>
<feature type="strand" evidence="6">
    <location>
        <begin position="65"/>
        <end position="67"/>
    </location>
</feature>
<feature type="strand" evidence="6">
    <location>
        <begin position="75"/>
        <end position="77"/>
    </location>
</feature>
<feature type="helix" evidence="6">
    <location>
        <begin position="91"/>
        <end position="100"/>
    </location>
</feature>
<feature type="strand" evidence="6">
    <location>
        <begin position="112"/>
        <end position="117"/>
    </location>
</feature>
<feature type="strand" evidence="6">
    <location>
        <begin position="122"/>
        <end position="124"/>
    </location>
</feature>
<feature type="strand" evidence="6">
    <location>
        <begin position="126"/>
        <end position="129"/>
    </location>
</feature>
<feature type="strand" evidence="6">
    <location>
        <begin position="132"/>
        <end position="137"/>
    </location>
</feature>
<feature type="strand" evidence="6">
    <location>
        <begin position="141"/>
        <end position="147"/>
    </location>
</feature>
<feature type="helix" evidence="6">
    <location>
        <begin position="150"/>
        <end position="152"/>
    </location>
</feature>
<feature type="strand" evidence="6">
    <location>
        <begin position="167"/>
        <end position="176"/>
    </location>
</feature>
<feature type="helix" evidence="6">
    <location>
        <begin position="179"/>
        <end position="192"/>
    </location>
</feature>
<feature type="helix" evidence="6">
    <location>
        <begin position="200"/>
        <end position="208"/>
    </location>
</feature>
<feature type="helix" evidence="6">
    <location>
        <begin position="213"/>
        <end position="218"/>
    </location>
</feature>
<feature type="strand" evidence="6">
    <location>
        <begin position="222"/>
        <end position="224"/>
    </location>
</feature>
<feature type="turn" evidence="6">
    <location>
        <begin position="230"/>
        <end position="233"/>
    </location>
</feature>
<feature type="helix" evidence="6">
    <location>
        <begin position="240"/>
        <end position="249"/>
    </location>
</feature>
<feature type="strand" evidence="6">
    <location>
        <begin position="258"/>
        <end position="262"/>
    </location>
</feature>
<feature type="helix" evidence="6">
    <location>
        <begin position="263"/>
        <end position="276"/>
    </location>
</feature>
<feature type="turn" evidence="6">
    <location>
        <begin position="277"/>
        <end position="280"/>
    </location>
</feature>
<feature type="strand" evidence="6">
    <location>
        <begin position="281"/>
        <end position="283"/>
    </location>
</feature>
<feature type="strand" evidence="6">
    <location>
        <begin position="287"/>
        <end position="294"/>
    </location>
</feature>
<feature type="helix" evidence="6">
    <location>
        <begin position="296"/>
        <end position="300"/>
    </location>
</feature>
<feature type="strand" evidence="6">
    <location>
        <begin position="308"/>
        <end position="315"/>
    </location>
</feature>
<feature type="strand" evidence="6">
    <location>
        <begin position="321"/>
        <end position="332"/>
    </location>
</feature>
<feature type="strand" evidence="6">
    <location>
        <begin position="336"/>
        <end position="349"/>
    </location>
</feature>
<feature type="strand" evidence="6">
    <location>
        <begin position="352"/>
        <end position="358"/>
    </location>
</feature>
<feature type="helix" evidence="6">
    <location>
        <begin position="362"/>
        <end position="367"/>
    </location>
</feature>
<feature type="strand" evidence="6">
    <location>
        <begin position="371"/>
        <end position="373"/>
    </location>
</feature>
<feature type="strand" evidence="6">
    <location>
        <begin position="375"/>
        <end position="381"/>
    </location>
</feature>
<feature type="turn" evidence="6">
    <location>
        <begin position="382"/>
        <end position="384"/>
    </location>
</feature>
<feature type="strand" evidence="6">
    <location>
        <begin position="385"/>
        <end position="391"/>
    </location>
</feature>
<feature type="helix" evidence="6">
    <location>
        <begin position="393"/>
        <end position="395"/>
    </location>
</feature>
<feature type="turn" evidence="6">
    <location>
        <begin position="410"/>
        <end position="412"/>
    </location>
</feature>
<feature type="strand" evidence="6">
    <location>
        <begin position="417"/>
        <end position="419"/>
    </location>
</feature>
<feature type="strand" evidence="6">
    <location>
        <begin position="422"/>
        <end position="424"/>
    </location>
</feature>
<feature type="helix" evidence="6">
    <location>
        <begin position="431"/>
        <end position="433"/>
    </location>
</feature>
<feature type="helix" evidence="6">
    <location>
        <begin position="434"/>
        <end position="442"/>
    </location>
</feature>
<feature type="turn" evidence="7">
    <location>
        <begin position="444"/>
        <end position="447"/>
    </location>
</feature>
<feature type="helix" evidence="6">
    <location>
        <begin position="454"/>
        <end position="462"/>
    </location>
</feature>
<feature type="helix" evidence="6">
    <location>
        <begin position="469"/>
        <end position="475"/>
    </location>
</feature>
<feature type="helix" evidence="6">
    <location>
        <begin position="478"/>
        <end position="481"/>
    </location>
</feature>
<feature type="strand" evidence="7">
    <location>
        <begin position="488"/>
        <end position="490"/>
    </location>
</feature>
<feature type="helix" evidence="6">
    <location>
        <begin position="491"/>
        <end position="500"/>
    </location>
</feature>
<feature type="helix" evidence="6">
    <location>
        <begin position="501"/>
        <end position="503"/>
    </location>
</feature>
<feature type="helix" evidence="6">
    <location>
        <begin position="506"/>
        <end position="512"/>
    </location>
</feature>
<feature type="helix" evidence="6">
    <location>
        <begin position="520"/>
        <end position="528"/>
    </location>
</feature>
<feature type="helix" evidence="6">
    <location>
        <begin position="533"/>
        <end position="536"/>
    </location>
</feature>
<feature type="helix" evidence="6">
    <location>
        <begin position="541"/>
        <end position="545"/>
    </location>
</feature>
<feature type="helix" evidence="6">
    <location>
        <begin position="552"/>
        <end position="563"/>
    </location>
</feature>
<feature type="helix" evidence="6">
    <location>
        <begin position="565"/>
        <end position="576"/>
    </location>
</feature>
<proteinExistence type="evidence at protein level"/>
<keyword id="KW-0002">3D-structure</keyword>
<keyword id="KW-0227">DNA damage</keyword>
<keyword id="KW-0234">DNA repair</keyword>
<keyword id="KW-0235">DNA replication</keyword>
<keyword id="KW-0436">Ligase</keyword>
<keyword id="KW-0460">Magnesium</keyword>
<keyword id="KW-0479">Metal-binding</keyword>
<keyword id="KW-0520">NAD</keyword>
<keyword id="KW-0862">Zinc</keyword>
<organism>
    <name type="scientific">Thermus filiformis</name>
    <dbReference type="NCBI Taxonomy" id="276"/>
    <lineage>
        <taxon>Bacteria</taxon>
        <taxon>Thermotogati</taxon>
        <taxon>Deinococcota</taxon>
        <taxon>Deinococci</taxon>
        <taxon>Thermales</taxon>
        <taxon>Thermaceae</taxon>
        <taxon>Thermus</taxon>
    </lineage>
</organism>
<sequence>MTREEARRRINELRDLIRYHNYRYYVLADPEISDAEYDRLLRELKELEERFPEFKSPDSPTEQVGARPLEPTFRPVRHPTRMYSLDNAFTYEEVLAFEERLERALGRKRPFLYTVEHKVDGLSVNLYYEEGVLVFGATRGDGEVGEEVTQNLLTIPTIPRRLKGVPDRLEVRGEVYMPIEAFLRLNEELEERGEKVFKNPRNAAAGSLRQKDPRVTAKRGLRATFYALGLGLEESGLKSQYELLLWLKEKGFPVEHGYEKALGAEGVEEVYRRFLAQRHALPFEADGVVVKLDDLALWRELGYTARAPRFALAYKFPAEEKETRLLDVVFQVGRTGRVTPVGVLEPVFIEGSEVSRVTLHNESYIEELDIRIGDWVLVHKAGGVIPEVLRVLKERRTGEERPIRWPETCPECGHRLVKEGKVHRCPNPLCPAKRFEAIRHYASRKAMDIEGLGEKLIERLLEKGLVRDVADLYHLRKEDLLGLERMGEKSAQNLLRQIEESKHRGLERLLYALGLPGVGEVLARNLARRFGTMDRLLEASLEELLEVEEVGELTARAILETLKDPAFRDLVRRLKEAGVSMESKEEVSDLLSGLTFVLTGELSRPREEVKALLQRLGAKVTDSVSRKTSYLVVGENPGSKLEKARALGVAVLTEEEFWRFLKEKGAPVPA</sequence>
<comment type="function">
    <text evidence="1 3">DNA ligase that catalyzes the formation of phosphodiester linkages between 5'-phosphoryl and 3'-hydroxyl groups in double-stranded DNA using NAD as a coenzyme and as the energy source for the reaction. It is essential for DNA replication and repair of damaged DNA.</text>
</comment>
<comment type="catalytic activity">
    <reaction evidence="1">
        <text>NAD(+) + (deoxyribonucleotide)n-3'-hydroxyl + 5'-phospho-(deoxyribonucleotide)m = (deoxyribonucleotide)n+m + AMP + beta-nicotinamide D-nucleotide.</text>
        <dbReference type="EC" id="6.5.1.2"/>
    </reaction>
</comment>
<comment type="cofactor">
    <cofactor evidence="3">
        <name>Mg(2+)</name>
        <dbReference type="ChEBI" id="CHEBI:18420"/>
    </cofactor>
</comment>
<comment type="biophysicochemical properties">
    <temperatureDependence>
        <text evidence="3">Optimum temperature is 70 degrees Celsius.</text>
    </temperatureDependence>
</comment>
<comment type="similarity">
    <text evidence="1">Belongs to the NAD-dependent DNA ligase family. LigA subfamily.</text>
</comment>
<evidence type="ECO:0000255" key="1">
    <source>
        <dbReference type="HAMAP-Rule" id="MF_01588"/>
    </source>
</evidence>
<evidence type="ECO:0000269" key="2">
    <source>
    </source>
</evidence>
<evidence type="ECO:0000269" key="3">
    <source>
    </source>
</evidence>
<evidence type="ECO:0000305" key="4"/>
<evidence type="ECO:0000305" key="5">
    <source>
    </source>
</evidence>
<evidence type="ECO:0007829" key="6">
    <source>
        <dbReference type="PDB" id="1DGS"/>
    </source>
</evidence>
<evidence type="ECO:0007829" key="7">
    <source>
        <dbReference type="PDB" id="1V9P"/>
    </source>
</evidence>
<accession>Q9ZHI0</accession>
<accession>Q9ZFY4</accession>
<protein>
    <recommendedName>
        <fullName evidence="1">DNA ligase</fullName>
        <ecNumber evidence="1">6.5.1.2</ecNumber>
    </recommendedName>
    <alternativeName>
        <fullName evidence="1">Polydeoxyribonucleotide synthase [NAD(+)]</fullName>
    </alternativeName>
    <alternativeName>
        <fullName>Tfi DNA ligase</fullName>
    </alternativeName>
</protein>
<dbReference type="EC" id="6.5.1.2" evidence="1"/>
<dbReference type="EMBL" id="AF061572">
    <property type="protein sequence ID" value="AAC68862.1"/>
    <property type="molecule type" value="Genomic_DNA"/>
</dbReference>
<dbReference type="EMBL" id="AF092866">
    <property type="protein sequence ID" value="AAD13192.1"/>
    <property type="molecule type" value="Genomic_DNA"/>
</dbReference>
<dbReference type="PDB" id="1DGS">
    <property type="method" value="X-ray"/>
    <property type="resolution" value="2.90 A"/>
    <property type="chains" value="A/B=1-670"/>
</dbReference>
<dbReference type="PDB" id="1V9P">
    <property type="method" value="X-ray"/>
    <property type="resolution" value="2.90 A"/>
    <property type="chains" value="A/B=1-584"/>
</dbReference>
<dbReference type="PDBsum" id="1DGS"/>
<dbReference type="PDBsum" id="1V9P"/>
<dbReference type="SMR" id="Q9ZHI0"/>
<dbReference type="STRING" id="276.THFILI_03970"/>
<dbReference type="BRENDA" id="6.5.1.2">
    <property type="organism ID" value="6336"/>
</dbReference>
<dbReference type="EvolutionaryTrace" id="Q9ZHI0"/>
<dbReference type="GO" id="GO:0005829">
    <property type="term" value="C:cytosol"/>
    <property type="evidence" value="ECO:0007669"/>
    <property type="project" value="TreeGrafter"/>
</dbReference>
<dbReference type="GO" id="GO:0003677">
    <property type="term" value="F:DNA binding"/>
    <property type="evidence" value="ECO:0007669"/>
    <property type="project" value="InterPro"/>
</dbReference>
<dbReference type="GO" id="GO:0003911">
    <property type="term" value="F:DNA ligase (NAD+) activity"/>
    <property type="evidence" value="ECO:0007669"/>
    <property type="project" value="UniProtKB-UniRule"/>
</dbReference>
<dbReference type="GO" id="GO:0046872">
    <property type="term" value="F:metal ion binding"/>
    <property type="evidence" value="ECO:0007669"/>
    <property type="project" value="UniProtKB-KW"/>
</dbReference>
<dbReference type="GO" id="GO:0006281">
    <property type="term" value="P:DNA repair"/>
    <property type="evidence" value="ECO:0007669"/>
    <property type="project" value="UniProtKB-KW"/>
</dbReference>
<dbReference type="GO" id="GO:0006260">
    <property type="term" value="P:DNA replication"/>
    <property type="evidence" value="ECO:0007669"/>
    <property type="project" value="UniProtKB-KW"/>
</dbReference>
<dbReference type="CDD" id="cd17748">
    <property type="entry name" value="BRCT_DNA_ligase_like"/>
    <property type="match status" value="1"/>
</dbReference>
<dbReference type="CDD" id="cd00114">
    <property type="entry name" value="LIGANc"/>
    <property type="match status" value="1"/>
</dbReference>
<dbReference type="FunFam" id="1.10.150.20:FF:000006">
    <property type="entry name" value="DNA ligase"/>
    <property type="match status" value="1"/>
</dbReference>
<dbReference type="FunFam" id="1.10.150.20:FF:000007">
    <property type="entry name" value="DNA ligase"/>
    <property type="match status" value="1"/>
</dbReference>
<dbReference type="FunFam" id="1.10.287.610:FF:000002">
    <property type="entry name" value="DNA ligase"/>
    <property type="match status" value="1"/>
</dbReference>
<dbReference type="FunFam" id="2.40.50.140:FF:000012">
    <property type="entry name" value="DNA ligase"/>
    <property type="match status" value="1"/>
</dbReference>
<dbReference type="FunFam" id="3.30.470.30:FF:000001">
    <property type="entry name" value="DNA ligase"/>
    <property type="match status" value="1"/>
</dbReference>
<dbReference type="Gene3D" id="3.30.1490.70">
    <property type="match status" value="1"/>
</dbReference>
<dbReference type="Gene3D" id="6.20.10.30">
    <property type="match status" value="1"/>
</dbReference>
<dbReference type="Gene3D" id="1.10.150.20">
    <property type="entry name" value="5' to 3' exonuclease, C-terminal subdomain"/>
    <property type="match status" value="2"/>
</dbReference>
<dbReference type="Gene3D" id="3.40.50.10190">
    <property type="entry name" value="BRCT domain"/>
    <property type="match status" value="1"/>
</dbReference>
<dbReference type="Gene3D" id="3.30.470.30">
    <property type="entry name" value="DNA ligase/mRNA capping enzyme"/>
    <property type="match status" value="1"/>
</dbReference>
<dbReference type="Gene3D" id="1.10.287.610">
    <property type="entry name" value="Helix hairpin bin"/>
    <property type="match status" value="1"/>
</dbReference>
<dbReference type="Gene3D" id="2.40.50.140">
    <property type="entry name" value="Nucleic acid-binding proteins"/>
    <property type="match status" value="1"/>
</dbReference>
<dbReference type="HAMAP" id="MF_01588">
    <property type="entry name" value="DNA_ligase_A"/>
    <property type="match status" value="1"/>
</dbReference>
<dbReference type="InterPro" id="IPR001357">
    <property type="entry name" value="BRCT_dom"/>
</dbReference>
<dbReference type="InterPro" id="IPR036420">
    <property type="entry name" value="BRCT_dom_sf"/>
</dbReference>
<dbReference type="InterPro" id="IPR041663">
    <property type="entry name" value="DisA/LigA_HHH"/>
</dbReference>
<dbReference type="InterPro" id="IPR001679">
    <property type="entry name" value="DNA_ligase"/>
</dbReference>
<dbReference type="InterPro" id="IPR018239">
    <property type="entry name" value="DNA_ligase_AS"/>
</dbReference>
<dbReference type="InterPro" id="IPR033136">
    <property type="entry name" value="DNA_ligase_CS"/>
</dbReference>
<dbReference type="InterPro" id="IPR013839">
    <property type="entry name" value="DNAligase_adenylation"/>
</dbReference>
<dbReference type="InterPro" id="IPR013840">
    <property type="entry name" value="DNAligase_N"/>
</dbReference>
<dbReference type="InterPro" id="IPR003583">
    <property type="entry name" value="Hlx-hairpin-Hlx_DNA-bd_motif"/>
</dbReference>
<dbReference type="InterPro" id="IPR012340">
    <property type="entry name" value="NA-bd_OB-fold"/>
</dbReference>
<dbReference type="InterPro" id="IPR004150">
    <property type="entry name" value="NAD_DNA_ligase_OB"/>
</dbReference>
<dbReference type="InterPro" id="IPR010994">
    <property type="entry name" value="RuvA_2-like"/>
</dbReference>
<dbReference type="InterPro" id="IPR004149">
    <property type="entry name" value="Znf_DNAligase_C4"/>
</dbReference>
<dbReference type="NCBIfam" id="TIGR00575">
    <property type="entry name" value="dnlj"/>
    <property type="match status" value="1"/>
</dbReference>
<dbReference type="NCBIfam" id="NF005932">
    <property type="entry name" value="PRK07956.1"/>
    <property type="match status" value="1"/>
</dbReference>
<dbReference type="PANTHER" id="PTHR23389">
    <property type="entry name" value="CHROMOSOME TRANSMISSION FIDELITY FACTOR 18"/>
    <property type="match status" value="1"/>
</dbReference>
<dbReference type="PANTHER" id="PTHR23389:SF9">
    <property type="entry name" value="DNA LIGASE"/>
    <property type="match status" value="1"/>
</dbReference>
<dbReference type="Pfam" id="PF00533">
    <property type="entry name" value="BRCT"/>
    <property type="match status" value="1"/>
</dbReference>
<dbReference type="Pfam" id="PF01653">
    <property type="entry name" value="DNA_ligase_aden"/>
    <property type="match status" value="1"/>
</dbReference>
<dbReference type="Pfam" id="PF03120">
    <property type="entry name" value="DNA_ligase_OB"/>
    <property type="match status" value="1"/>
</dbReference>
<dbReference type="Pfam" id="PF03119">
    <property type="entry name" value="DNA_ligase_ZBD"/>
    <property type="match status" value="1"/>
</dbReference>
<dbReference type="Pfam" id="PF12826">
    <property type="entry name" value="HHH_2"/>
    <property type="match status" value="1"/>
</dbReference>
<dbReference type="Pfam" id="PF14520">
    <property type="entry name" value="HHH_5"/>
    <property type="match status" value="1"/>
</dbReference>
<dbReference type="Pfam" id="PF22745">
    <property type="entry name" value="Nlig-Ia"/>
    <property type="match status" value="1"/>
</dbReference>
<dbReference type="PIRSF" id="PIRSF001604">
    <property type="entry name" value="LigA"/>
    <property type="match status" value="1"/>
</dbReference>
<dbReference type="SMART" id="SM00292">
    <property type="entry name" value="BRCT"/>
    <property type="match status" value="1"/>
</dbReference>
<dbReference type="SMART" id="SM00278">
    <property type="entry name" value="HhH1"/>
    <property type="match status" value="4"/>
</dbReference>
<dbReference type="SMART" id="SM00532">
    <property type="entry name" value="LIGANc"/>
    <property type="match status" value="1"/>
</dbReference>
<dbReference type="SUPFAM" id="SSF52113">
    <property type="entry name" value="BRCT domain"/>
    <property type="match status" value="1"/>
</dbReference>
<dbReference type="SUPFAM" id="SSF56091">
    <property type="entry name" value="DNA ligase/mRNA capping enzyme, catalytic domain"/>
    <property type="match status" value="1"/>
</dbReference>
<dbReference type="SUPFAM" id="SSF50249">
    <property type="entry name" value="Nucleic acid-binding proteins"/>
    <property type="match status" value="1"/>
</dbReference>
<dbReference type="SUPFAM" id="SSF47781">
    <property type="entry name" value="RuvA domain 2-like"/>
    <property type="match status" value="1"/>
</dbReference>
<dbReference type="PROSITE" id="PS50172">
    <property type="entry name" value="BRCT"/>
    <property type="match status" value="1"/>
</dbReference>
<dbReference type="PROSITE" id="PS01055">
    <property type="entry name" value="DNA_LIGASE_N1"/>
    <property type="match status" value="1"/>
</dbReference>
<dbReference type="PROSITE" id="PS01056">
    <property type="entry name" value="DNA_LIGASE_N2"/>
    <property type="match status" value="1"/>
</dbReference>
<reference key="1">
    <citation type="journal article" date="1998" name="Mol. Cells">
        <title>Cloning, nucleotide sequence, and expression of the DNA ligase-encoding gene from Thermus filiformis.</title>
        <authorList>
            <person name="Kim H.K."/>
            <person name="Kwon S.-T."/>
        </authorList>
    </citation>
    <scope>NUCLEOTIDE SEQUENCE [GENOMIC DNA]</scope>
</reference>
<reference key="2">
    <citation type="journal article" date="1999" name="Nucleic Acids Res.">
        <title>Biochemical properties of a high fidelity DNA ligase from Thermus species AK16D.</title>
        <authorList>
            <person name="Tong J."/>
            <person name="Cao W."/>
            <person name="Barany F."/>
        </authorList>
    </citation>
    <scope>NUCLEOTIDE SEQUENCE [GENOMIC DNA] OF 50-586</scope>
    <source>
        <strain>Tok6A1</strain>
    </source>
</reference>
<reference key="3">
    <citation type="journal article" date="2004" name="FEMS Microbiol. Lett.">
        <title>Mutational analyses of the thermostable NAD+-dependent DNA ligase from Thermus filiformis.</title>
        <authorList>
            <person name="Jeon H.J."/>
            <person name="Shin H.-J."/>
            <person name="Choi J.J."/>
            <person name="Hoe H.-S."/>
            <person name="Kim H.-K."/>
            <person name="Suh S.W."/>
            <person name="Kwon S.-T."/>
        </authorList>
    </citation>
    <scope>FUNCTION</scope>
    <scope>ACTIVE SITE</scope>
    <scope>COFACTOR</scope>
    <scope>INTERACTION WITH DNA</scope>
    <scope>BIOPHYSICOCHEMICAL PROPERTIES</scope>
</reference>
<reference key="4">
    <citation type="journal article" date="2000" name="EMBO J.">
        <title>Crystal structure of NAD(+)-dependent DNA ligase: modular architecture and functional implications.</title>
        <authorList>
            <person name="Lee J.Y."/>
            <person name="Chang C."/>
            <person name="Song H.K."/>
            <person name="Moon J."/>
            <person name="Yang J.K."/>
            <person name="Kim H.-K."/>
            <person name="Kwon S.-T."/>
            <person name="Suh S.W."/>
        </authorList>
    </citation>
    <scope>X-RAY CRYSTALLOGRAPHY (2.9 ANGSTROMS) IN COMPLEXES WITH AMP AND ZINC IONS</scope>
    <scope>ACTIVE SITE</scope>
</reference>
<gene>
    <name evidence="1" type="primary">ligA</name>
</gene>
<name>DNLJ_THEFI</name>